<gene>
    <name evidence="1" type="primary">sulA</name>
    <name type="ordered locus">KPK_3582</name>
</gene>
<name>SULA_KLEP3</name>
<accession>B5XY47</accession>
<keyword id="KW-0131">Cell cycle</keyword>
<keyword id="KW-0132">Cell division</keyword>
<keyword id="KW-0227">DNA damage</keyword>
<keyword id="KW-0717">Septation</keyword>
<keyword id="KW-0742">SOS response</keyword>
<evidence type="ECO:0000255" key="1">
    <source>
        <dbReference type="HAMAP-Rule" id="MF_01179"/>
    </source>
</evidence>
<evidence type="ECO:0000256" key="2">
    <source>
        <dbReference type="SAM" id="MobiDB-lite"/>
    </source>
</evidence>
<comment type="function">
    <text evidence="1">Component of the SOS system and an inhibitor of cell division. Accumulation of SulA causes rapid cessation of cell division and the appearance of long, non-septate filaments. In the presence of GTP, binds a polymerization-competent form of FtsZ in a 1:1 ratio, thus inhibiting FtsZ polymerization and therefore preventing it from participating in the assembly of the Z ring. This mechanism prevents the premature segregation of damaged DNA to daughter cells during cell division.</text>
</comment>
<comment type="subunit">
    <text evidence="1">Interacts with FtsZ.</text>
</comment>
<comment type="induction">
    <text evidence="1">By DNA damage, as part of the SOS response.</text>
</comment>
<comment type="PTM">
    <text evidence="1">Is rapidly cleaved and degraded by the Lon protease once DNA damage is repaired.</text>
</comment>
<comment type="similarity">
    <text evidence="1">Belongs to the SulA family.</text>
</comment>
<feature type="chain" id="PRO_1000138163" description="Cell division inhibitor SulA">
    <location>
        <begin position="1"/>
        <end position="169"/>
    </location>
</feature>
<feature type="region of interest" description="Disordered" evidence="2">
    <location>
        <begin position="1"/>
        <end position="22"/>
    </location>
</feature>
<feature type="region of interest" description="FtsZ binding" evidence="1">
    <location>
        <begin position="106"/>
        <end position="112"/>
    </location>
</feature>
<feature type="region of interest" description="Lon protease binding" evidence="1">
    <location>
        <begin position="162"/>
        <end position="169"/>
    </location>
</feature>
<feature type="compositionally biased region" description="Polar residues" evidence="2">
    <location>
        <begin position="1"/>
        <end position="15"/>
    </location>
</feature>
<feature type="site" description="Essential for degradation by Lon protease" evidence="1">
    <location>
        <position position="169"/>
    </location>
</feature>
<organism>
    <name type="scientific">Klebsiella pneumoniae (strain 342)</name>
    <dbReference type="NCBI Taxonomy" id="507522"/>
    <lineage>
        <taxon>Bacteria</taxon>
        <taxon>Pseudomonadati</taxon>
        <taxon>Pseudomonadota</taxon>
        <taxon>Gammaproteobacteria</taxon>
        <taxon>Enterobacterales</taxon>
        <taxon>Enterobacteriaceae</taxon>
        <taxon>Klebsiella/Raoultella group</taxon>
        <taxon>Klebsiella</taxon>
        <taxon>Klebsiella pneumoniae complex</taxon>
    </lineage>
</organism>
<dbReference type="EMBL" id="CP000964">
    <property type="protein sequence ID" value="ACI08190.1"/>
    <property type="molecule type" value="Genomic_DNA"/>
</dbReference>
<dbReference type="SMR" id="B5XY47"/>
<dbReference type="KEGG" id="kpe:KPK_3582"/>
<dbReference type="HOGENOM" id="CLU_118972_1_0_6"/>
<dbReference type="Proteomes" id="UP000001734">
    <property type="component" value="Chromosome"/>
</dbReference>
<dbReference type="GO" id="GO:0000917">
    <property type="term" value="P:division septum assembly"/>
    <property type="evidence" value="ECO:0007669"/>
    <property type="project" value="UniProtKB-KW"/>
</dbReference>
<dbReference type="GO" id="GO:0006281">
    <property type="term" value="P:DNA repair"/>
    <property type="evidence" value="ECO:0007669"/>
    <property type="project" value="TreeGrafter"/>
</dbReference>
<dbReference type="GO" id="GO:0051782">
    <property type="term" value="P:negative regulation of cell division"/>
    <property type="evidence" value="ECO:0007669"/>
    <property type="project" value="UniProtKB-UniRule"/>
</dbReference>
<dbReference type="GO" id="GO:0009432">
    <property type="term" value="P:SOS response"/>
    <property type="evidence" value="ECO:0007669"/>
    <property type="project" value="UniProtKB-UniRule"/>
</dbReference>
<dbReference type="FunFam" id="3.40.50.300:FF:000417">
    <property type="entry name" value="Cell division inhibitor SulA"/>
    <property type="match status" value="1"/>
</dbReference>
<dbReference type="Gene3D" id="3.40.50.300">
    <property type="entry name" value="P-loop containing nucleotide triphosphate hydrolases"/>
    <property type="match status" value="1"/>
</dbReference>
<dbReference type="HAMAP" id="MF_01179">
    <property type="entry name" value="SulA"/>
    <property type="match status" value="1"/>
</dbReference>
<dbReference type="InterPro" id="IPR004596">
    <property type="entry name" value="Cell_div_suppressor_SulA"/>
</dbReference>
<dbReference type="InterPro" id="IPR027417">
    <property type="entry name" value="P-loop_NTPase"/>
</dbReference>
<dbReference type="InterPro" id="IPR050356">
    <property type="entry name" value="SulA_CellDiv_inhibitor"/>
</dbReference>
<dbReference type="InterPro" id="IPR047696">
    <property type="entry name" value="SulA_enterobact"/>
</dbReference>
<dbReference type="NCBIfam" id="NF007892">
    <property type="entry name" value="PRK10595.1"/>
    <property type="match status" value="1"/>
</dbReference>
<dbReference type="NCBIfam" id="TIGR00623">
    <property type="entry name" value="SOS_SulA_coli"/>
    <property type="match status" value="1"/>
</dbReference>
<dbReference type="PANTHER" id="PTHR35369">
    <property type="entry name" value="BLR3025 PROTEIN-RELATED"/>
    <property type="match status" value="1"/>
</dbReference>
<dbReference type="PANTHER" id="PTHR35369:SF4">
    <property type="entry name" value="CELL DIVISION INHIBITOR SULA"/>
    <property type="match status" value="1"/>
</dbReference>
<dbReference type="Pfam" id="PF03846">
    <property type="entry name" value="SulA"/>
    <property type="match status" value="1"/>
</dbReference>
<dbReference type="PIRSF" id="PIRSF003093">
    <property type="entry name" value="SulA"/>
    <property type="match status" value="1"/>
</dbReference>
<dbReference type="SUPFAM" id="SSF52540">
    <property type="entry name" value="P-loop containing nucleoside triphosphate hydrolases"/>
    <property type="match status" value="1"/>
</dbReference>
<protein>
    <recommendedName>
        <fullName evidence="1">Cell division inhibitor SulA</fullName>
    </recommendedName>
</protein>
<sequence>MFTSAHANRSAQASASAGHYAHRSGEQTANGLISEIVYREDQPMMTQLLLLPLLQQLGQQSRWQLWLTPQQKLSREWVQSAGLPLSKVMQISQLSPCHTVDSMIRALRTGNYSVVICWLTEELTAEEHERLVNAAQEGCAMGFIMRPVRNQGTLGRQLSGLKIHSNLYH</sequence>
<reference key="1">
    <citation type="journal article" date="2008" name="PLoS Genet.">
        <title>Complete genome sequence of the N2-fixing broad host range endophyte Klebsiella pneumoniae 342 and virulence predictions verified in mice.</title>
        <authorList>
            <person name="Fouts D.E."/>
            <person name="Tyler H.L."/>
            <person name="DeBoy R.T."/>
            <person name="Daugherty S."/>
            <person name="Ren Q."/>
            <person name="Badger J.H."/>
            <person name="Durkin A.S."/>
            <person name="Huot H."/>
            <person name="Shrivastava S."/>
            <person name="Kothari S."/>
            <person name="Dodson R.J."/>
            <person name="Mohamoud Y."/>
            <person name="Khouri H."/>
            <person name="Roesch L.F.W."/>
            <person name="Krogfelt K.A."/>
            <person name="Struve C."/>
            <person name="Triplett E.W."/>
            <person name="Methe B.A."/>
        </authorList>
    </citation>
    <scope>NUCLEOTIDE SEQUENCE [LARGE SCALE GENOMIC DNA]</scope>
    <source>
        <strain>342</strain>
    </source>
</reference>
<proteinExistence type="inferred from homology"/>